<comment type="function">
    <text evidence="1">Molecular chaperone. Has ATPase activity.</text>
</comment>
<comment type="subunit">
    <text evidence="1">Homodimer.</text>
</comment>
<comment type="subcellular location">
    <subcellularLocation>
        <location evidence="1">Cytoplasm</location>
    </subcellularLocation>
</comment>
<comment type="similarity">
    <text evidence="1">Belongs to the heat shock protein 90 family.</text>
</comment>
<reference key="1">
    <citation type="journal article" date="2005" name="Science">
        <title>Extensive DNA inversions in the B. fragilis genome control variable gene expression.</title>
        <authorList>
            <person name="Cerdeno-Tarraga A.-M."/>
            <person name="Patrick S."/>
            <person name="Crossman L.C."/>
            <person name="Blakely G."/>
            <person name="Abratt V."/>
            <person name="Lennard N."/>
            <person name="Poxton I."/>
            <person name="Duerden B."/>
            <person name="Harris B."/>
            <person name="Quail M.A."/>
            <person name="Barron A."/>
            <person name="Clark L."/>
            <person name="Corton C."/>
            <person name="Doggett J."/>
            <person name="Holden M.T.G."/>
            <person name="Larke N."/>
            <person name="Line A."/>
            <person name="Lord A."/>
            <person name="Norbertczak H."/>
            <person name="Ormond D."/>
            <person name="Price C."/>
            <person name="Rabbinowitsch E."/>
            <person name="Woodward J."/>
            <person name="Barrell B.G."/>
            <person name="Parkhill J."/>
        </authorList>
    </citation>
    <scope>NUCLEOTIDE SEQUENCE [LARGE SCALE GENOMIC DNA]</scope>
    <source>
        <strain>ATCC 25285 / DSM 2151 / CCUG 4856 / JCM 11019 / LMG 10263 / NCTC 9343 / Onslow / VPI 2553 / EN-2</strain>
    </source>
</reference>
<sequence>MQKGNIGVTTENIFPIIKKFLYSDHEIFLRELVSNAVDATQKLNTLASISEFKGELGDLTVHVSLGKDTITISDRGIGLTAEEIDKYINQIAFSGANDFLEKYKNDANAIIGHFGLGFYSAFMVSKKVEIITKSYKEGAQAVKWTCDGSPEFTLEEVEKADRGTDIVLYIDDDCKEFLEESRISALLKKYCSFLPVPIAFGKKKEWKDGKQVETAEDNVINDTIPLWTKKPSELSDEDYKKFYRELYPMSDEPLFWIHLNVDYPFHLTGILYFPKVKSNIDLNKNKIQLYCNQVYVTDSVEGIVPDFLTLLHGVLDSPDIPLNVSRSYLQSDSNVKKISTYISKKVSDRLQSIFKNDRAQFEEKWNDLKIFINYGMLTQEDFYDKAQKFALFTDTDGKHYTFEEYQTLIKDNQTDKDKNLIYLYANNKDEQFAYIEAAKNKGYNVLLMDGQLDVAMVSMLEQKLEKSRFTRVDSDVVDNLIVKEDKKSDVLEASKQEALSAAFKSQLPKMEKVEFNVMTQALGENGSPVMITQSEYMRRMKEMANIQAGMSFYGEMPDMFNLVLNSDHKLVKEVLADEEKECSAAIAPIQTELEDVTKRRDALKKKQEGKKDEDIPTAEKDELNDLDKKWDELKQQKDSIFAGYAGKNKVVRQLIDLALLQNNMLKGEALNNFVKRSIELI</sequence>
<accession>Q5LCH4</accession>
<protein>
    <recommendedName>
        <fullName evidence="1">Chaperone protein HtpG</fullName>
    </recommendedName>
    <alternativeName>
        <fullName evidence="1">Heat shock protein HtpG</fullName>
    </alternativeName>
    <alternativeName>
        <fullName evidence="1">High temperature protein G</fullName>
    </alternativeName>
</protein>
<proteinExistence type="inferred from homology"/>
<name>HTPG_BACFN</name>
<feature type="chain" id="PRO_0000236983" description="Chaperone protein HtpG">
    <location>
        <begin position="1"/>
        <end position="681"/>
    </location>
</feature>
<feature type="region of interest" description="A; substrate-binding" evidence="1">
    <location>
        <begin position="1"/>
        <end position="326"/>
    </location>
</feature>
<feature type="region of interest" description="B" evidence="1">
    <location>
        <begin position="327"/>
        <end position="545"/>
    </location>
</feature>
<feature type="region of interest" description="C" evidence="1">
    <location>
        <begin position="546"/>
        <end position="681"/>
    </location>
</feature>
<feature type="region of interest" description="Disordered" evidence="2">
    <location>
        <begin position="601"/>
        <end position="620"/>
    </location>
</feature>
<dbReference type="EMBL" id="CR626927">
    <property type="protein sequence ID" value="CAH08191.1"/>
    <property type="molecule type" value="Genomic_DNA"/>
</dbReference>
<dbReference type="RefSeq" id="WP_005793737.1">
    <property type="nucleotide sequence ID" value="NZ_UFTH01000001.1"/>
</dbReference>
<dbReference type="SMR" id="Q5LCH4"/>
<dbReference type="PaxDb" id="272559-BF9343_2410"/>
<dbReference type="GeneID" id="60367725"/>
<dbReference type="KEGG" id="bfs:BF9343_2410"/>
<dbReference type="eggNOG" id="COG0326">
    <property type="taxonomic scope" value="Bacteria"/>
</dbReference>
<dbReference type="HOGENOM" id="CLU_006684_3_2_10"/>
<dbReference type="Proteomes" id="UP000006731">
    <property type="component" value="Chromosome"/>
</dbReference>
<dbReference type="GO" id="GO:0005737">
    <property type="term" value="C:cytoplasm"/>
    <property type="evidence" value="ECO:0007669"/>
    <property type="project" value="UniProtKB-SubCell"/>
</dbReference>
<dbReference type="GO" id="GO:0005524">
    <property type="term" value="F:ATP binding"/>
    <property type="evidence" value="ECO:0007669"/>
    <property type="project" value="UniProtKB-UniRule"/>
</dbReference>
<dbReference type="GO" id="GO:0016887">
    <property type="term" value="F:ATP hydrolysis activity"/>
    <property type="evidence" value="ECO:0007669"/>
    <property type="project" value="InterPro"/>
</dbReference>
<dbReference type="GO" id="GO:0140662">
    <property type="term" value="F:ATP-dependent protein folding chaperone"/>
    <property type="evidence" value="ECO:0007669"/>
    <property type="project" value="InterPro"/>
</dbReference>
<dbReference type="GO" id="GO:0051082">
    <property type="term" value="F:unfolded protein binding"/>
    <property type="evidence" value="ECO:0007669"/>
    <property type="project" value="UniProtKB-UniRule"/>
</dbReference>
<dbReference type="CDD" id="cd16927">
    <property type="entry name" value="HATPase_Hsp90-like"/>
    <property type="match status" value="1"/>
</dbReference>
<dbReference type="FunFam" id="3.40.50.11260:FF:000009">
    <property type="entry name" value="Chaperone protein HtpG"/>
    <property type="match status" value="1"/>
</dbReference>
<dbReference type="FunFam" id="3.30.230.80:FF:000008">
    <property type="entry name" value="Molecular chaperone HtpG"/>
    <property type="match status" value="1"/>
</dbReference>
<dbReference type="FunFam" id="3.30.565.10:FF:000076">
    <property type="entry name" value="Molecular chaperone HtpG"/>
    <property type="match status" value="1"/>
</dbReference>
<dbReference type="Gene3D" id="3.30.230.80">
    <property type="match status" value="1"/>
</dbReference>
<dbReference type="Gene3D" id="3.40.50.11260">
    <property type="match status" value="1"/>
</dbReference>
<dbReference type="Gene3D" id="1.20.120.790">
    <property type="entry name" value="Heat shock protein 90, C-terminal domain"/>
    <property type="match status" value="1"/>
</dbReference>
<dbReference type="Gene3D" id="3.30.565.10">
    <property type="entry name" value="Histidine kinase-like ATPase, C-terminal domain"/>
    <property type="match status" value="1"/>
</dbReference>
<dbReference type="HAMAP" id="MF_00505">
    <property type="entry name" value="HSP90"/>
    <property type="match status" value="1"/>
</dbReference>
<dbReference type="InterPro" id="IPR036890">
    <property type="entry name" value="HATPase_C_sf"/>
</dbReference>
<dbReference type="InterPro" id="IPR019805">
    <property type="entry name" value="Heat_shock_protein_90_CS"/>
</dbReference>
<dbReference type="InterPro" id="IPR037196">
    <property type="entry name" value="HSP90_C"/>
</dbReference>
<dbReference type="InterPro" id="IPR001404">
    <property type="entry name" value="Hsp90_fam"/>
</dbReference>
<dbReference type="InterPro" id="IPR020575">
    <property type="entry name" value="Hsp90_N"/>
</dbReference>
<dbReference type="InterPro" id="IPR020568">
    <property type="entry name" value="Ribosomal_Su5_D2-typ_SF"/>
</dbReference>
<dbReference type="NCBIfam" id="NF003555">
    <property type="entry name" value="PRK05218.1"/>
    <property type="match status" value="1"/>
</dbReference>
<dbReference type="PANTHER" id="PTHR11528">
    <property type="entry name" value="HEAT SHOCK PROTEIN 90 FAMILY MEMBER"/>
    <property type="match status" value="1"/>
</dbReference>
<dbReference type="Pfam" id="PF13589">
    <property type="entry name" value="HATPase_c_3"/>
    <property type="match status" value="1"/>
</dbReference>
<dbReference type="Pfam" id="PF00183">
    <property type="entry name" value="HSP90"/>
    <property type="match status" value="1"/>
</dbReference>
<dbReference type="PIRSF" id="PIRSF002583">
    <property type="entry name" value="Hsp90"/>
    <property type="match status" value="1"/>
</dbReference>
<dbReference type="PRINTS" id="PR00775">
    <property type="entry name" value="HEATSHOCK90"/>
</dbReference>
<dbReference type="SUPFAM" id="SSF55874">
    <property type="entry name" value="ATPase domain of HSP90 chaperone/DNA topoisomerase II/histidine kinase"/>
    <property type="match status" value="1"/>
</dbReference>
<dbReference type="SUPFAM" id="SSF54211">
    <property type="entry name" value="Ribosomal protein S5 domain 2-like"/>
    <property type="match status" value="1"/>
</dbReference>
<dbReference type="PROSITE" id="PS00298">
    <property type="entry name" value="HSP90"/>
    <property type="match status" value="1"/>
</dbReference>
<keyword id="KW-0067">ATP-binding</keyword>
<keyword id="KW-0143">Chaperone</keyword>
<keyword id="KW-0963">Cytoplasm</keyword>
<keyword id="KW-0547">Nucleotide-binding</keyword>
<keyword id="KW-0346">Stress response</keyword>
<evidence type="ECO:0000255" key="1">
    <source>
        <dbReference type="HAMAP-Rule" id="MF_00505"/>
    </source>
</evidence>
<evidence type="ECO:0000256" key="2">
    <source>
        <dbReference type="SAM" id="MobiDB-lite"/>
    </source>
</evidence>
<gene>
    <name evidence="1" type="primary">htpG</name>
    <name type="ordered locus">BF2491</name>
</gene>
<organism>
    <name type="scientific">Bacteroides fragilis (strain ATCC 25285 / DSM 2151 / CCUG 4856 / JCM 11019 / LMG 10263 / NCTC 9343 / Onslow / VPI 2553 / EN-2)</name>
    <dbReference type="NCBI Taxonomy" id="272559"/>
    <lineage>
        <taxon>Bacteria</taxon>
        <taxon>Pseudomonadati</taxon>
        <taxon>Bacteroidota</taxon>
        <taxon>Bacteroidia</taxon>
        <taxon>Bacteroidales</taxon>
        <taxon>Bacteroidaceae</taxon>
        <taxon>Bacteroides</taxon>
    </lineage>
</organism>